<reference key="1">
    <citation type="journal article" date="2014" name="Nat. Commun.">
        <title>Multiple recent horizontal transfers of a large genomic region in cheese making fungi.</title>
        <authorList>
            <person name="Cheeseman K."/>
            <person name="Ropars J."/>
            <person name="Renault P."/>
            <person name="Dupont J."/>
            <person name="Gouzy J."/>
            <person name="Branca A."/>
            <person name="Abraham A.-L."/>
            <person name="Ceppi M."/>
            <person name="Conseiller E."/>
            <person name="Debuchy R."/>
            <person name="Malagnac F."/>
            <person name="Goarin A."/>
            <person name="Silar P."/>
            <person name="Lacoste S."/>
            <person name="Sallet E."/>
            <person name="Bensimon A."/>
            <person name="Giraud T."/>
            <person name="Brygoo Y."/>
        </authorList>
    </citation>
    <scope>NUCLEOTIDE SEQUENCE [LARGE SCALE GENOMIC DNA]</scope>
    <source>
        <strain>FM164</strain>
    </source>
</reference>
<reference key="2">
    <citation type="journal article" date="2022" name="Org. Lett.">
        <title>Biosynthesis of Annullatin D in Penicillium roqueforti Implies Oxidative Lactonization between Two Hydroxyl Groups Catalyzed by a BBE-like Enzyme.</title>
        <authorList>
            <person name="Xiang P."/>
            <person name="Kemmerich B."/>
            <person name="Yang L."/>
            <person name="Li S.M."/>
        </authorList>
    </citation>
    <scope>FUNCTION</scope>
    <scope>CATALYTIC ACTIVITY</scope>
    <scope>PATHWAY</scope>
</reference>
<feature type="chain" id="PRO_0000458204" description="Short-chain dehydrogenase anuB">
    <location>
        <begin position="1"/>
        <end position="283"/>
    </location>
</feature>
<feature type="active site" description="Proton acceptor" evidence="3">
    <location>
        <position position="166"/>
    </location>
</feature>
<feature type="active site" description="Proton donor" evidence="2">
    <location>
        <position position="166"/>
    </location>
</feature>
<feature type="active site" description="Lowers pKa of active site Tyr" evidence="2">
    <location>
        <position position="170"/>
    </location>
</feature>
<feature type="binding site" evidence="1">
    <location>
        <position position="57"/>
    </location>
    <ligand>
        <name>NADP(+)</name>
        <dbReference type="ChEBI" id="CHEBI:58349"/>
    </ligand>
</feature>
<feature type="binding site" evidence="1">
    <location>
        <position position="78"/>
    </location>
    <ligand>
        <name>NADP(+)</name>
        <dbReference type="ChEBI" id="CHEBI:58349"/>
    </ligand>
</feature>
<feature type="binding site" evidence="2">
    <location>
        <position position="106"/>
    </location>
    <ligand>
        <name>NADP(+)</name>
        <dbReference type="ChEBI" id="CHEBI:58349"/>
    </ligand>
</feature>
<feature type="binding site" evidence="2">
    <location>
        <position position="166"/>
    </location>
    <ligand>
        <name>NADP(+)</name>
        <dbReference type="ChEBI" id="CHEBI:58349"/>
    </ligand>
</feature>
<feature type="binding site" evidence="2">
    <location>
        <position position="170"/>
    </location>
    <ligand>
        <name>NADP(+)</name>
        <dbReference type="ChEBI" id="CHEBI:58349"/>
    </ligand>
</feature>
<feature type="binding site" evidence="2">
    <location>
        <position position="199"/>
    </location>
    <ligand>
        <name>NADP(+)</name>
        <dbReference type="ChEBI" id="CHEBI:58349"/>
    </ligand>
</feature>
<feature type="binding site" evidence="1">
    <location>
        <position position="201"/>
    </location>
    <ligand>
        <name>NADP(+)</name>
        <dbReference type="ChEBI" id="CHEBI:58349"/>
    </ligand>
</feature>
<accession>W6QEJ5</accession>
<dbReference type="EC" id="1.1.1.-" evidence="7"/>
<dbReference type="EMBL" id="HG792017">
    <property type="protein sequence ID" value="CDM34451.1"/>
    <property type="molecule type" value="Genomic_DNA"/>
</dbReference>
<dbReference type="SMR" id="W6QEJ5"/>
<dbReference type="STRING" id="1365484.W6QEJ5"/>
<dbReference type="OMA" id="VHIFHPL"/>
<dbReference type="OrthoDB" id="2102561at2759"/>
<dbReference type="Proteomes" id="UP000030686">
    <property type="component" value="Unassembled WGS sequence"/>
</dbReference>
<dbReference type="GO" id="GO:0005783">
    <property type="term" value="C:endoplasmic reticulum"/>
    <property type="evidence" value="ECO:0007669"/>
    <property type="project" value="TreeGrafter"/>
</dbReference>
<dbReference type="GO" id="GO:0005811">
    <property type="term" value="C:lipid droplet"/>
    <property type="evidence" value="ECO:0007669"/>
    <property type="project" value="TreeGrafter"/>
</dbReference>
<dbReference type="GO" id="GO:0000140">
    <property type="term" value="F:acylglycerone-phosphate reductase (NADP+) activity"/>
    <property type="evidence" value="ECO:0007669"/>
    <property type="project" value="TreeGrafter"/>
</dbReference>
<dbReference type="GO" id="GO:0004806">
    <property type="term" value="F:triacylglycerol lipase activity"/>
    <property type="evidence" value="ECO:0007669"/>
    <property type="project" value="TreeGrafter"/>
</dbReference>
<dbReference type="GO" id="GO:0006654">
    <property type="term" value="P:phosphatidic acid biosynthetic process"/>
    <property type="evidence" value="ECO:0007669"/>
    <property type="project" value="TreeGrafter"/>
</dbReference>
<dbReference type="GO" id="GO:0044550">
    <property type="term" value="P:secondary metabolite biosynthetic process"/>
    <property type="evidence" value="ECO:0007669"/>
    <property type="project" value="UniProtKB-ARBA"/>
</dbReference>
<dbReference type="GO" id="GO:0019433">
    <property type="term" value="P:triglyceride catabolic process"/>
    <property type="evidence" value="ECO:0007669"/>
    <property type="project" value="TreeGrafter"/>
</dbReference>
<dbReference type="Gene3D" id="3.40.50.720">
    <property type="entry name" value="NAD(P)-binding Rossmann-like Domain"/>
    <property type="match status" value="1"/>
</dbReference>
<dbReference type="InterPro" id="IPR036291">
    <property type="entry name" value="NAD(P)-bd_dom_sf"/>
</dbReference>
<dbReference type="InterPro" id="IPR020904">
    <property type="entry name" value="Sc_DH/Rdtase_CS"/>
</dbReference>
<dbReference type="InterPro" id="IPR002347">
    <property type="entry name" value="SDR_fam"/>
</dbReference>
<dbReference type="PANTHER" id="PTHR44169">
    <property type="entry name" value="NADPH-DEPENDENT 1-ACYLDIHYDROXYACETONE PHOSPHATE REDUCTASE"/>
    <property type="match status" value="1"/>
</dbReference>
<dbReference type="PANTHER" id="PTHR44169:SF3">
    <property type="entry name" value="SHORT-CHAIN DEHYDROGENASE SRDE"/>
    <property type="match status" value="1"/>
</dbReference>
<dbReference type="Pfam" id="PF00106">
    <property type="entry name" value="adh_short"/>
    <property type="match status" value="1"/>
</dbReference>
<dbReference type="PRINTS" id="PR00081">
    <property type="entry name" value="GDHRDH"/>
</dbReference>
<dbReference type="PRINTS" id="PR00080">
    <property type="entry name" value="SDRFAMILY"/>
</dbReference>
<dbReference type="SUPFAM" id="SSF51735">
    <property type="entry name" value="NAD(P)-binding Rossmann-fold domains"/>
    <property type="match status" value="1"/>
</dbReference>
<dbReference type="PROSITE" id="PS00061">
    <property type="entry name" value="ADH_SHORT"/>
    <property type="match status" value="1"/>
</dbReference>
<name>ANUB_PENRF</name>
<sequence>MKLSAIWESKNGLRGSGTCSHRRVSTPDIQSPDCGEGGIGHALALDFKNQGYVVFTTLLAHEPRDHLTDLGIHSFTADVTKDSDIEQLKEAISSLTEGSLSVLVNNAGICYTMTAIDTDVKEVEKMFGVNVFGPMRMVHIFHPLLIKARGKIVNIGSELTDFEASYNATKAALHHWGNTLRVEMKPLGVEVVNVISGEVGTNILKRDHNRKLPEDSFYRPLEKEFMNHVTRTPRTTTPAEYSRSVVIEVMKQHSTAWFWTGASSGIVRFSEQFFPRTLWVNSL</sequence>
<keyword id="KW-0521">NADP</keyword>
<keyword id="KW-0560">Oxidoreductase</keyword>
<keyword id="KW-1185">Reference proteome</keyword>
<gene>
    <name evidence="5" type="primary">anuB</name>
    <name type="ORF">PROQFM164_S03g001175</name>
</gene>
<proteinExistence type="evidence at protein level"/>
<evidence type="ECO:0000250" key="1">
    <source>
        <dbReference type="UniProtKB" id="L0E2Z4"/>
    </source>
</evidence>
<evidence type="ECO:0000250" key="2">
    <source>
        <dbReference type="UniProtKB" id="O93868"/>
    </source>
</evidence>
<evidence type="ECO:0000250" key="3">
    <source>
        <dbReference type="UniProtKB" id="Q92506"/>
    </source>
</evidence>
<evidence type="ECO:0000269" key="4">
    <source>
    </source>
</evidence>
<evidence type="ECO:0000303" key="5">
    <source>
    </source>
</evidence>
<evidence type="ECO:0000305" key="6"/>
<evidence type="ECO:0000305" key="7">
    <source>
    </source>
</evidence>
<protein>
    <recommendedName>
        <fullName evidence="5">Short-chain dehydrogenase anuB</fullName>
        <ecNumber evidence="7">1.1.1.-</ecNumber>
    </recommendedName>
    <alternativeName>
        <fullName evidence="5">Annullatin D biosynthesis cluster protein B</fullName>
    </alternativeName>
</protein>
<organism>
    <name type="scientific">Penicillium roqueforti (strain FM164)</name>
    <dbReference type="NCBI Taxonomy" id="1365484"/>
    <lineage>
        <taxon>Eukaryota</taxon>
        <taxon>Fungi</taxon>
        <taxon>Dikarya</taxon>
        <taxon>Ascomycota</taxon>
        <taxon>Pezizomycotina</taxon>
        <taxon>Eurotiomycetes</taxon>
        <taxon>Eurotiomycetidae</taxon>
        <taxon>Eurotiales</taxon>
        <taxon>Aspergillaceae</taxon>
        <taxon>Penicillium</taxon>
    </lineage>
</organism>
<comment type="function">
    <text evidence="4 7">Highly reducing polyketide synthase; part of the gene cluster that mediates the biosynthesis of annullatin D, an alkylated aromatic polyketide with a fused dihydrobenzofuran lactone ring system that exhibits potent agonistic activities toward the cannabinoid receptors (PubMed:35939524). The annullatin backbone 2-hydroxymethyl-3-pentylphenol is assembled from one acetyl-CoA starter unit and 5 malonyl-CoA elongation units by cooperation of the highly reducing polyketide synthase anuA, the short-chain dehydrogenase anuB and the oxidoreductase anuC, before being hydroxylated at the C-5 alkyl chain by the cytochrome P450 monooxygenase anuE to form (8S)-annullatin E. The prenyltransferase anuH subsequently installs one isoprenyl group at the benzene ring to form (8S)-annullatin J. Enzymatic or nonenzymatic dihydro-benzofuran ring formation between the prenyl and the phenolic hydroxyl groups in (8S)-annullatin J results in two diastereomers (2S,9S)-annullatin H and compound 12. The intermediate (2S,9S)-annullatin H is then converted to (2S,9S)-annullatin D by the FAD-linked oxidoreductase anuG-catalyzed five-member lactone ring formation. The isomer 12 acts as a substrate for the short-chain dehydrogenase anuF and is oxidized to (2R)-annullatin F, which is subsequently acetylated by an acetyltransferase leading to (2R)-annullatin G formation. The remaining enzymes identified within the cluster, anuD, anuI and anuJ, seem not to be involved in annullatin biosynthesis (Probable).</text>
</comment>
<comment type="pathway">
    <text evidence="7">Secondary metabolite biosynthesis.</text>
</comment>
<comment type="similarity">
    <text evidence="6">Belongs to the short-chain dehydrogenases/reductases (SDR) family.</text>
</comment>